<dbReference type="EC" id="3.1.3.16"/>
<dbReference type="EMBL" id="X63558">
    <property type="protein sequence ID" value="CAA45119.1"/>
    <property type="molecule type" value="mRNA"/>
</dbReference>
<dbReference type="PIR" id="S26225">
    <property type="entry name" value="S26225"/>
</dbReference>
<dbReference type="SMR" id="P48487"/>
<dbReference type="GO" id="GO:0005737">
    <property type="term" value="C:cytoplasm"/>
    <property type="evidence" value="ECO:0007669"/>
    <property type="project" value="TreeGrafter"/>
</dbReference>
<dbReference type="GO" id="GO:0005634">
    <property type="term" value="C:nucleus"/>
    <property type="evidence" value="ECO:0007669"/>
    <property type="project" value="TreeGrafter"/>
</dbReference>
<dbReference type="GO" id="GO:0046872">
    <property type="term" value="F:metal ion binding"/>
    <property type="evidence" value="ECO:0007669"/>
    <property type="project" value="UniProtKB-KW"/>
</dbReference>
<dbReference type="GO" id="GO:0004722">
    <property type="term" value="F:protein serine/threonine phosphatase activity"/>
    <property type="evidence" value="ECO:0007669"/>
    <property type="project" value="UniProtKB-EC"/>
</dbReference>
<dbReference type="CDD" id="cd07414">
    <property type="entry name" value="MPP_PP1_PPKL"/>
    <property type="match status" value="1"/>
</dbReference>
<dbReference type="FunFam" id="3.60.21.10:FF:000026">
    <property type="entry name" value="Serine/threonine-protein phosphatase"/>
    <property type="match status" value="1"/>
</dbReference>
<dbReference type="Gene3D" id="3.60.21.10">
    <property type="match status" value="1"/>
</dbReference>
<dbReference type="InterPro" id="IPR004843">
    <property type="entry name" value="Calcineurin-like_PHP_ApaH"/>
</dbReference>
<dbReference type="InterPro" id="IPR029052">
    <property type="entry name" value="Metallo-depent_PP-like"/>
</dbReference>
<dbReference type="InterPro" id="IPR050341">
    <property type="entry name" value="PP1_catalytic_subunit"/>
</dbReference>
<dbReference type="InterPro" id="IPR006186">
    <property type="entry name" value="Ser/Thr-sp_prot-phosphatase"/>
</dbReference>
<dbReference type="InterPro" id="IPR031675">
    <property type="entry name" value="STPPase_N"/>
</dbReference>
<dbReference type="PANTHER" id="PTHR11668">
    <property type="entry name" value="SERINE/THREONINE PROTEIN PHOSPHATASE"/>
    <property type="match status" value="1"/>
</dbReference>
<dbReference type="PANTHER" id="PTHR11668:SF481">
    <property type="entry name" value="SERINE_THREONINE-PROTEIN PHOSPHATASE"/>
    <property type="match status" value="1"/>
</dbReference>
<dbReference type="Pfam" id="PF00149">
    <property type="entry name" value="Metallophos"/>
    <property type="match status" value="1"/>
</dbReference>
<dbReference type="Pfam" id="PF16891">
    <property type="entry name" value="STPPase_N"/>
    <property type="match status" value="1"/>
</dbReference>
<dbReference type="PRINTS" id="PR00114">
    <property type="entry name" value="STPHPHTASE"/>
</dbReference>
<dbReference type="SMART" id="SM00156">
    <property type="entry name" value="PP2Ac"/>
    <property type="match status" value="1"/>
</dbReference>
<dbReference type="SUPFAM" id="SSF56300">
    <property type="entry name" value="Metallo-dependent phosphatases"/>
    <property type="match status" value="1"/>
</dbReference>
<dbReference type="PROSITE" id="PS00125">
    <property type="entry name" value="SER_THR_PHOSPHATASE"/>
    <property type="match status" value="1"/>
</dbReference>
<sequence>MAEKPAPEQEQEQTRAMEPAVLDDIIRRLVEFRNTRPGSGKQVHLSEGEIRQLCAVSKDIFLQQPILLELEAPIKICGDIHGQYSDLLRLFEYGGFPPDANYLFLGDYVDRGKQSLETICFLLAYKIKYPENFFLLRGNHECASINRIYGFYDECKRRFNVRLWKIFTDCFNCLPVAALIDRILCMHGGISPELMSLDQIRSISRPLDIPDSGLVCDLLWSDPSGDVKGWGANDRGVSYTFGADTVAEFLQKNDMDLICRAHQVVEDGYEFFAERQVVTVFSAPNYCGEFDNAGAMMSIDESLMCSFQILKPSEKK</sequence>
<comment type="catalytic activity">
    <reaction>
        <text>O-phospho-L-seryl-[protein] + H2O = L-seryl-[protein] + phosphate</text>
        <dbReference type="Rhea" id="RHEA:20629"/>
        <dbReference type="Rhea" id="RHEA-COMP:9863"/>
        <dbReference type="Rhea" id="RHEA-COMP:11604"/>
        <dbReference type="ChEBI" id="CHEBI:15377"/>
        <dbReference type="ChEBI" id="CHEBI:29999"/>
        <dbReference type="ChEBI" id="CHEBI:43474"/>
        <dbReference type="ChEBI" id="CHEBI:83421"/>
        <dbReference type="EC" id="3.1.3.16"/>
    </reaction>
</comment>
<comment type="catalytic activity">
    <reaction>
        <text>O-phospho-L-threonyl-[protein] + H2O = L-threonyl-[protein] + phosphate</text>
        <dbReference type="Rhea" id="RHEA:47004"/>
        <dbReference type="Rhea" id="RHEA-COMP:11060"/>
        <dbReference type="Rhea" id="RHEA-COMP:11605"/>
        <dbReference type="ChEBI" id="CHEBI:15377"/>
        <dbReference type="ChEBI" id="CHEBI:30013"/>
        <dbReference type="ChEBI" id="CHEBI:43474"/>
        <dbReference type="ChEBI" id="CHEBI:61977"/>
        <dbReference type="EC" id="3.1.3.16"/>
    </reaction>
</comment>
<comment type="cofactor">
    <cofactor evidence="1">
        <name>Mn(2+)</name>
        <dbReference type="ChEBI" id="CHEBI:29035"/>
    </cofactor>
    <text evidence="1">Binds 2 manganese ions per subunit.</text>
</comment>
<comment type="similarity">
    <text evidence="2">Belongs to the PPP phosphatase family. PP-1 subfamily.</text>
</comment>
<protein>
    <recommendedName>
        <fullName>Serine/threonine-protein phosphatase PP1</fullName>
        <ecNumber>3.1.3.16</ecNumber>
    </recommendedName>
</protein>
<name>PP1_BRAOL</name>
<keyword id="KW-0378">Hydrolase</keyword>
<keyword id="KW-0464">Manganese</keyword>
<keyword id="KW-0479">Metal-binding</keyword>
<keyword id="KW-0904">Protein phosphatase</keyword>
<reference key="1">
    <citation type="journal article" date="1992" name="Plant Mol. Biol.">
        <title>Molecular characterization of type 1 serine/threonine phosphatases from Brassica oleracea.</title>
        <authorList>
            <person name="Rundle S.J."/>
            <person name="Nasrallah J.B."/>
        </authorList>
    </citation>
    <scope>NUCLEOTIDE SEQUENCE [MRNA]</scope>
    <source>
        <tissue>Flower</tissue>
    </source>
</reference>
<organism>
    <name type="scientific">Brassica oleracea</name>
    <name type="common">Wild cabbage</name>
    <dbReference type="NCBI Taxonomy" id="3712"/>
    <lineage>
        <taxon>Eukaryota</taxon>
        <taxon>Viridiplantae</taxon>
        <taxon>Streptophyta</taxon>
        <taxon>Embryophyta</taxon>
        <taxon>Tracheophyta</taxon>
        <taxon>Spermatophyta</taxon>
        <taxon>Magnoliopsida</taxon>
        <taxon>eudicotyledons</taxon>
        <taxon>Gunneridae</taxon>
        <taxon>Pentapetalae</taxon>
        <taxon>rosids</taxon>
        <taxon>malvids</taxon>
        <taxon>Brassicales</taxon>
        <taxon>Brassicaceae</taxon>
        <taxon>Brassiceae</taxon>
        <taxon>Brassica</taxon>
    </lineage>
</organism>
<gene>
    <name type="primary">PP1</name>
</gene>
<feature type="chain" id="PRO_0000058806" description="Serine/threonine-protein phosphatase PP1">
    <location>
        <begin position="1"/>
        <end position="316"/>
    </location>
</feature>
<feature type="active site" description="Proton donor" evidence="1">
    <location>
        <position position="140"/>
    </location>
</feature>
<feature type="binding site" evidence="1">
    <location>
        <position position="79"/>
    </location>
    <ligand>
        <name>Mn(2+)</name>
        <dbReference type="ChEBI" id="CHEBI:29035"/>
        <label>1</label>
    </ligand>
</feature>
<feature type="binding site" evidence="1">
    <location>
        <position position="81"/>
    </location>
    <ligand>
        <name>Mn(2+)</name>
        <dbReference type="ChEBI" id="CHEBI:29035"/>
        <label>1</label>
    </ligand>
</feature>
<feature type="binding site" evidence="1">
    <location>
        <position position="107"/>
    </location>
    <ligand>
        <name>Mn(2+)</name>
        <dbReference type="ChEBI" id="CHEBI:29035"/>
        <label>1</label>
    </ligand>
</feature>
<feature type="binding site" evidence="1">
    <location>
        <position position="107"/>
    </location>
    <ligand>
        <name>Mn(2+)</name>
        <dbReference type="ChEBI" id="CHEBI:29035"/>
        <label>2</label>
    </ligand>
</feature>
<feature type="binding site" evidence="1">
    <location>
        <position position="139"/>
    </location>
    <ligand>
        <name>Mn(2+)</name>
        <dbReference type="ChEBI" id="CHEBI:29035"/>
        <label>2</label>
    </ligand>
</feature>
<feature type="binding site" evidence="1">
    <location>
        <position position="187"/>
    </location>
    <ligand>
        <name>Mn(2+)</name>
        <dbReference type="ChEBI" id="CHEBI:29035"/>
        <label>2</label>
    </ligand>
</feature>
<feature type="binding site" evidence="1">
    <location>
        <position position="262"/>
    </location>
    <ligand>
        <name>Mn(2+)</name>
        <dbReference type="ChEBI" id="CHEBI:29035"/>
        <label>2</label>
    </ligand>
</feature>
<proteinExistence type="evidence at transcript level"/>
<evidence type="ECO:0000250" key="1"/>
<evidence type="ECO:0000305" key="2"/>
<accession>P48487</accession>